<comment type="subcellular location">
    <subcellularLocation>
        <location evidence="1">Spore core</location>
    </subcellularLocation>
</comment>
<comment type="induction">
    <text evidence="1">Expressed only in the forespore compartment of sporulating cells.</text>
</comment>
<comment type="similarity">
    <text evidence="1">Belongs to the SspP family.</text>
</comment>
<comment type="sequence caution" evidence="3">
    <conflict type="erroneous initiation">
        <sequence resource="EMBL-CDS" id="ABO66575"/>
    </conflict>
</comment>
<keyword id="KW-0749">Sporulation</keyword>
<reference key="1">
    <citation type="journal article" date="2007" name="Proc. Natl. Acad. Sci. U.S.A.">
        <title>Genome and proteome of long-chain alkane degrading Geobacillus thermodenitrificans NG80-2 isolated from a deep-subsurface oil reservoir.</title>
        <authorList>
            <person name="Feng L."/>
            <person name="Wang W."/>
            <person name="Cheng J."/>
            <person name="Ren Y."/>
            <person name="Zhao G."/>
            <person name="Gao C."/>
            <person name="Tang Y."/>
            <person name="Liu X."/>
            <person name="Han W."/>
            <person name="Peng X."/>
            <person name="Liu R."/>
            <person name="Wang L."/>
        </authorList>
    </citation>
    <scope>NUCLEOTIDE SEQUENCE [LARGE SCALE GENOMIC DNA]</scope>
    <source>
        <strain>NG80-2</strain>
    </source>
</reference>
<sequence>MTNKNDSKDMRKNVSKGDNPGQPEPLDGSKKVKNRNHTRQKHNTSHDM</sequence>
<name>SSPP_GEOTN</name>
<gene>
    <name evidence="1" type="primary">sspP</name>
    <name type="ordered locus">GTNG_1203</name>
</gene>
<dbReference type="EMBL" id="CP000557">
    <property type="protein sequence ID" value="ABO66575.1"/>
    <property type="status" value="ALT_INIT"/>
    <property type="molecule type" value="Genomic_DNA"/>
</dbReference>
<dbReference type="RefSeq" id="WP_081432638.1">
    <property type="nucleotide sequence ID" value="NC_009328.1"/>
</dbReference>
<dbReference type="KEGG" id="gtn:GTNG_1203"/>
<dbReference type="eggNOG" id="ENOG5032ZXB">
    <property type="taxonomic scope" value="Bacteria"/>
</dbReference>
<dbReference type="HOGENOM" id="CLU_210130_1_0_9"/>
<dbReference type="Proteomes" id="UP000001578">
    <property type="component" value="Chromosome"/>
</dbReference>
<dbReference type="GO" id="GO:0030436">
    <property type="term" value="P:asexual sporulation"/>
    <property type="evidence" value="ECO:0007669"/>
    <property type="project" value="UniProtKB-UniRule"/>
</dbReference>
<dbReference type="GO" id="GO:0030435">
    <property type="term" value="P:sporulation resulting in formation of a cellular spore"/>
    <property type="evidence" value="ECO:0007669"/>
    <property type="project" value="UniProtKB-KW"/>
</dbReference>
<dbReference type="HAMAP" id="MF_00666">
    <property type="entry name" value="SspP"/>
    <property type="match status" value="1"/>
</dbReference>
<dbReference type="InterPro" id="IPR012614">
    <property type="entry name" value="SASP_SspP"/>
</dbReference>
<dbReference type="NCBIfam" id="NF006905">
    <property type="entry name" value="PRK09399.1"/>
    <property type="match status" value="1"/>
</dbReference>
<dbReference type="Pfam" id="PF08179">
    <property type="entry name" value="SspP"/>
    <property type="match status" value="1"/>
</dbReference>
<accession>A4IMM1</accession>
<proteinExistence type="inferred from homology"/>
<protein>
    <recommendedName>
        <fullName evidence="1">Small, acid-soluble spore protein P</fullName>
        <shortName evidence="1">SASP P</shortName>
    </recommendedName>
</protein>
<organism>
    <name type="scientific">Geobacillus thermodenitrificans (strain NG80-2)</name>
    <dbReference type="NCBI Taxonomy" id="420246"/>
    <lineage>
        <taxon>Bacteria</taxon>
        <taxon>Bacillati</taxon>
        <taxon>Bacillota</taxon>
        <taxon>Bacilli</taxon>
        <taxon>Bacillales</taxon>
        <taxon>Anoxybacillaceae</taxon>
        <taxon>Geobacillus</taxon>
    </lineage>
</organism>
<feature type="chain" id="PRO_0000329121" description="Small, acid-soluble spore protein P">
    <location>
        <begin position="1"/>
        <end position="48"/>
    </location>
</feature>
<feature type="region of interest" description="Disordered" evidence="2">
    <location>
        <begin position="1"/>
        <end position="48"/>
    </location>
</feature>
<feature type="compositionally biased region" description="Basic and acidic residues" evidence="2">
    <location>
        <begin position="1"/>
        <end position="12"/>
    </location>
</feature>
<feature type="compositionally biased region" description="Basic residues" evidence="2">
    <location>
        <begin position="31"/>
        <end position="48"/>
    </location>
</feature>
<evidence type="ECO:0000255" key="1">
    <source>
        <dbReference type="HAMAP-Rule" id="MF_00666"/>
    </source>
</evidence>
<evidence type="ECO:0000256" key="2">
    <source>
        <dbReference type="SAM" id="MobiDB-lite"/>
    </source>
</evidence>
<evidence type="ECO:0000305" key="3"/>